<dbReference type="EMBL" id="AM421808">
    <property type="protein sequence ID" value="CAM09476.1"/>
    <property type="molecule type" value="Genomic_DNA"/>
</dbReference>
<dbReference type="RefSeq" id="WP_002215455.1">
    <property type="nucleotide sequence ID" value="NC_008767.1"/>
</dbReference>
<dbReference type="SMR" id="A1KRJ8"/>
<dbReference type="GeneID" id="93387242"/>
<dbReference type="KEGG" id="nmc:NMC0157"/>
<dbReference type="HOGENOM" id="CLU_092403_0_2_4"/>
<dbReference type="Proteomes" id="UP000002286">
    <property type="component" value="Chromosome"/>
</dbReference>
<dbReference type="GO" id="GO:0015935">
    <property type="term" value="C:small ribosomal subunit"/>
    <property type="evidence" value="ECO:0007669"/>
    <property type="project" value="InterPro"/>
</dbReference>
<dbReference type="GO" id="GO:0019843">
    <property type="term" value="F:rRNA binding"/>
    <property type="evidence" value="ECO:0007669"/>
    <property type="project" value="UniProtKB-UniRule"/>
</dbReference>
<dbReference type="GO" id="GO:0003735">
    <property type="term" value="F:structural constituent of ribosome"/>
    <property type="evidence" value="ECO:0007669"/>
    <property type="project" value="InterPro"/>
</dbReference>
<dbReference type="GO" id="GO:0042274">
    <property type="term" value="P:ribosomal small subunit biogenesis"/>
    <property type="evidence" value="ECO:0007669"/>
    <property type="project" value="TreeGrafter"/>
</dbReference>
<dbReference type="GO" id="GO:0006412">
    <property type="term" value="P:translation"/>
    <property type="evidence" value="ECO:0007669"/>
    <property type="project" value="UniProtKB-UniRule"/>
</dbReference>
<dbReference type="CDD" id="cd00165">
    <property type="entry name" value="S4"/>
    <property type="match status" value="1"/>
</dbReference>
<dbReference type="FunFam" id="1.10.1050.10:FF:000001">
    <property type="entry name" value="30S ribosomal protein S4"/>
    <property type="match status" value="1"/>
</dbReference>
<dbReference type="FunFam" id="3.10.290.10:FF:000001">
    <property type="entry name" value="30S ribosomal protein S4"/>
    <property type="match status" value="1"/>
</dbReference>
<dbReference type="Gene3D" id="1.10.1050.10">
    <property type="entry name" value="Ribosomal Protein S4 Delta 41, Chain A, domain 1"/>
    <property type="match status" value="1"/>
</dbReference>
<dbReference type="Gene3D" id="3.10.290.10">
    <property type="entry name" value="RNA-binding S4 domain"/>
    <property type="match status" value="1"/>
</dbReference>
<dbReference type="HAMAP" id="MF_01306_B">
    <property type="entry name" value="Ribosomal_uS4_B"/>
    <property type="match status" value="1"/>
</dbReference>
<dbReference type="InterPro" id="IPR022801">
    <property type="entry name" value="Ribosomal_uS4"/>
</dbReference>
<dbReference type="InterPro" id="IPR005709">
    <property type="entry name" value="Ribosomal_uS4_bac-type"/>
</dbReference>
<dbReference type="InterPro" id="IPR018079">
    <property type="entry name" value="Ribosomal_uS4_CS"/>
</dbReference>
<dbReference type="InterPro" id="IPR001912">
    <property type="entry name" value="Ribosomal_uS4_N"/>
</dbReference>
<dbReference type="InterPro" id="IPR002942">
    <property type="entry name" value="S4_RNA-bd"/>
</dbReference>
<dbReference type="InterPro" id="IPR036986">
    <property type="entry name" value="S4_RNA-bd_sf"/>
</dbReference>
<dbReference type="NCBIfam" id="NF003717">
    <property type="entry name" value="PRK05327.1"/>
    <property type="match status" value="1"/>
</dbReference>
<dbReference type="NCBIfam" id="TIGR01017">
    <property type="entry name" value="rpsD_bact"/>
    <property type="match status" value="1"/>
</dbReference>
<dbReference type="PANTHER" id="PTHR11831">
    <property type="entry name" value="30S 40S RIBOSOMAL PROTEIN"/>
    <property type="match status" value="1"/>
</dbReference>
<dbReference type="PANTHER" id="PTHR11831:SF4">
    <property type="entry name" value="SMALL RIBOSOMAL SUBUNIT PROTEIN US4M"/>
    <property type="match status" value="1"/>
</dbReference>
<dbReference type="Pfam" id="PF00163">
    <property type="entry name" value="Ribosomal_S4"/>
    <property type="match status" value="1"/>
</dbReference>
<dbReference type="Pfam" id="PF01479">
    <property type="entry name" value="S4"/>
    <property type="match status" value="1"/>
</dbReference>
<dbReference type="SMART" id="SM01390">
    <property type="entry name" value="Ribosomal_S4"/>
    <property type="match status" value="1"/>
</dbReference>
<dbReference type="SMART" id="SM00363">
    <property type="entry name" value="S4"/>
    <property type="match status" value="1"/>
</dbReference>
<dbReference type="SUPFAM" id="SSF55174">
    <property type="entry name" value="Alpha-L RNA-binding motif"/>
    <property type="match status" value="1"/>
</dbReference>
<dbReference type="PROSITE" id="PS00632">
    <property type="entry name" value="RIBOSOMAL_S4"/>
    <property type="match status" value="1"/>
</dbReference>
<dbReference type="PROSITE" id="PS50889">
    <property type="entry name" value="S4"/>
    <property type="match status" value="1"/>
</dbReference>
<keyword id="KW-0687">Ribonucleoprotein</keyword>
<keyword id="KW-0689">Ribosomal protein</keyword>
<keyword id="KW-0694">RNA-binding</keyword>
<keyword id="KW-0699">rRNA-binding</keyword>
<feature type="chain" id="PRO_0000293323" description="Small ribosomal subunit protein uS4">
    <location>
        <begin position="1"/>
        <end position="206"/>
    </location>
</feature>
<feature type="domain" description="S4 RNA-binding" evidence="1">
    <location>
        <begin position="96"/>
        <end position="157"/>
    </location>
</feature>
<sequence length="206" mass="23250">MARYIGPKCKLARREGTDLFLKSARRSLDSKCKIDSAPGQHGAKKPRLSDYGLQLREKQKIRRIYGVLERQFRRYFAEADRRKGSTGELLLQLLESRLDNVVYRMGFGSTRAEARQLVSHKAIVVNGQVVNIPSFQVKAGDVVSVREKAKKQVRIQEALGLATQIGLPGWVSVDADKLEGVFKNMPDRSELTGDINEQLVVEFYSK</sequence>
<organism>
    <name type="scientific">Neisseria meningitidis serogroup C / serotype 2a (strain ATCC 700532 / DSM 15464 / FAM18)</name>
    <dbReference type="NCBI Taxonomy" id="272831"/>
    <lineage>
        <taxon>Bacteria</taxon>
        <taxon>Pseudomonadati</taxon>
        <taxon>Pseudomonadota</taxon>
        <taxon>Betaproteobacteria</taxon>
        <taxon>Neisseriales</taxon>
        <taxon>Neisseriaceae</taxon>
        <taxon>Neisseria</taxon>
    </lineage>
</organism>
<protein>
    <recommendedName>
        <fullName evidence="1">Small ribosomal subunit protein uS4</fullName>
    </recommendedName>
    <alternativeName>
        <fullName evidence="2">30S ribosomal protein S4</fullName>
    </alternativeName>
</protein>
<comment type="function">
    <text evidence="1">One of the primary rRNA binding proteins, it binds directly to 16S rRNA where it nucleates assembly of the body of the 30S subunit.</text>
</comment>
<comment type="function">
    <text evidence="1">With S5 and S12 plays an important role in translational accuracy.</text>
</comment>
<comment type="subunit">
    <text evidence="1">Part of the 30S ribosomal subunit. Contacts protein S5. The interaction surface between S4 and S5 is involved in control of translational fidelity.</text>
</comment>
<comment type="similarity">
    <text evidence="1">Belongs to the universal ribosomal protein uS4 family.</text>
</comment>
<gene>
    <name evidence="1" type="primary">rpsD</name>
    <name type="ordered locus">NMC0157</name>
</gene>
<evidence type="ECO:0000255" key="1">
    <source>
        <dbReference type="HAMAP-Rule" id="MF_01306"/>
    </source>
</evidence>
<evidence type="ECO:0000305" key="2"/>
<reference key="1">
    <citation type="journal article" date="2007" name="PLoS Genet.">
        <title>Meningococcal genetic variation mechanisms viewed through comparative analysis of serogroup C strain FAM18.</title>
        <authorList>
            <person name="Bentley S.D."/>
            <person name="Vernikos G.S."/>
            <person name="Snyder L.A.S."/>
            <person name="Churcher C."/>
            <person name="Arrowsmith C."/>
            <person name="Chillingworth T."/>
            <person name="Cronin A."/>
            <person name="Davis P.H."/>
            <person name="Holroyd N.E."/>
            <person name="Jagels K."/>
            <person name="Maddison M."/>
            <person name="Moule S."/>
            <person name="Rabbinowitsch E."/>
            <person name="Sharp S."/>
            <person name="Unwin L."/>
            <person name="Whitehead S."/>
            <person name="Quail M.A."/>
            <person name="Achtman M."/>
            <person name="Barrell B.G."/>
            <person name="Saunders N.J."/>
            <person name="Parkhill J."/>
        </authorList>
    </citation>
    <scope>NUCLEOTIDE SEQUENCE [LARGE SCALE GENOMIC DNA]</scope>
    <source>
        <strain>ATCC 700532 / DSM 15464 / FAM18</strain>
    </source>
</reference>
<proteinExistence type="inferred from homology"/>
<name>RS4_NEIMF</name>
<accession>A1KRJ8</accession>